<sequence>MASVWTDIRAVLPSTVSEFPLDFSEKIDLSVLKCLELSRDQLYSEADCPVSAERAQIIIDYSWEKLNIGTWRDVDKEWRRVYSYGCLFKVLSLCHGNPPQNIIQEAVRTCDMSLLMGAAIMDNILQRLVGILRNKIKTTCPNKAERSEEPFSKKRKHDCKSEPVLNPTKEVPRIHCPSLERFRSDFLDPKKPVIIEGITDLWPAFTQHPWSIDYLRTVAGCRTVPIEVGSKYTDEEWSQKLITVNDFIDRYITGTEEDGVGYLAQHQLFDQVPELKEDIRIPDYCCLGEGDEDDITINAWFGPGGTVSPLHQDPQQNFLAQVVGRKYIRLYSPEDTKSLYPHESQLLHNTSQVEVENPDLVKFPDFSRASYEECVLCPGDVLFIPLQHWYYVRSLELSFSVSFWWS</sequence>
<gene>
    <name type="primary">kdm8</name>
    <name type="synonym">jmjd5</name>
    <name type="ORF">zgc:173863</name>
</gene>
<dbReference type="EC" id="1.14.11.27"/>
<dbReference type="EMBL" id="BC153446">
    <property type="protein sequence ID" value="AAI53447.1"/>
    <property type="molecule type" value="mRNA"/>
</dbReference>
<dbReference type="SMR" id="A8E534"/>
<dbReference type="FunCoup" id="A8E534">
    <property type="interactions" value="1058"/>
</dbReference>
<dbReference type="STRING" id="7955.ENSDARP00000134388"/>
<dbReference type="PaxDb" id="7955-ENSDARP00000124888"/>
<dbReference type="PeptideAtlas" id="A8E534"/>
<dbReference type="AGR" id="ZFIN:ZDB-GENE-040718-411"/>
<dbReference type="ZFIN" id="ZDB-GENE-040718-411">
    <property type="gene designation" value="kdm8"/>
</dbReference>
<dbReference type="eggNOG" id="KOG2132">
    <property type="taxonomic scope" value="Eukaryota"/>
</dbReference>
<dbReference type="InParanoid" id="A8E534"/>
<dbReference type="PhylomeDB" id="A8E534"/>
<dbReference type="Reactome" id="R-DRE-9629569">
    <property type="pathway name" value="Protein hydroxylation"/>
</dbReference>
<dbReference type="PRO" id="PR:A8E534"/>
<dbReference type="Proteomes" id="UP000000437">
    <property type="component" value="Unplaced"/>
</dbReference>
<dbReference type="GO" id="GO:0005634">
    <property type="term" value="C:nucleus"/>
    <property type="evidence" value="ECO:0000250"/>
    <property type="project" value="UniProtKB"/>
</dbReference>
<dbReference type="GO" id="GO:0003682">
    <property type="term" value="F:chromatin binding"/>
    <property type="evidence" value="ECO:0000250"/>
    <property type="project" value="UniProtKB"/>
</dbReference>
<dbReference type="GO" id="GO:0051864">
    <property type="term" value="F:histone H3K36 demethylase activity"/>
    <property type="evidence" value="ECO:0000250"/>
    <property type="project" value="UniProtKB"/>
</dbReference>
<dbReference type="GO" id="GO:0140680">
    <property type="term" value="F:histone H3K36me/H3K36me2 demethylase activity"/>
    <property type="evidence" value="ECO:0007669"/>
    <property type="project" value="UniProtKB-EC"/>
</dbReference>
<dbReference type="GO" id="GO:0046872">
    <property type="term" value="F:metal ion binding"/>
    <property type="evidence" value="ECO:0007669"/>
    <property type="project" value="UniProtKB-KW"/>
</dbReference>
<dbReference type="GO" id="GO:0106157">
    <property type="term" value="F:peptidyl-arginine 3-dioxygenase activity"/>
    <property type="evidence" value="ECO:0000318"/>
    <property type="project" value="GO_Central"/>
</dbReference>
<dbReference type="GO" id="GO:0032922">
    <property type="term" value="P:circadian regulation of gene expression"/>
    <property type="evidence" value="ECO:0000250"/>
    <property type="project" value="UniProtKB"/>
</dbReference>
<dbReference type="GO" id="GO:0000086">
    <property type="term" value="P:G2/M transition of mitotic cell cycle"/>
    <property type="evidence" value="ECO:0000250"/>
    <property type="project" value="UniProtKB"/>
</dbReference>
<dbReference type="GO" id="GO:0045892">
    <property type="term" value="P:negative regulation of DNA-templated transcription"/>
    <property type="evidence" value="ECO:0000318"/>
    <property type="project" value="GO_Central"/>
</dbReference>
<dbReference type="GO" id="GO:0045893">
    <property type="term" value="P:positive regulation of DNA-templated transcription"/>
    <property type="evidence" value="ECO:0000250"/>
    <property type="project" value="UniProtKB"/>
</dbReference>
<dbReference type="FunFam" id="2.60.120.650:FF:000019">
    <property type="entry name" value="Bifunctional peptidase and arginyl-hydroxylase JMJD5"/>
    <property type="match status" value="1"/>
</dbReference>
<dbReference type="Gene3D" id="2.60.120.650">
    <property type="entry name" value="Cupin"/>
    <property type="match status" value="1"/>
</dbReference>
<dbReference type="InterPro" id="IPR056520">
    <property type="entry name" value="ARM_KDM8_N"/>
</dbReference>
<dbReference type="InterPro" id="IPR041667">
    <property type="entry name" value="Cupin_8"/>
</dbReference>
<dbReference type="InterPro" id="IPR003347">
    <property type="entry name" value="JmjC_dom"/>
</dbReference>
<dbReference type="PANTHER" id="PTHR12461:SF106">
    <property type="entry name" value="BIFUNCTIONAL PEPTIDASE AND ARGINYL-HYDROXYLASE JMJD5"/>
    <property type="match status" value="1"/>
</dbReference>
<dbReference type="PANTHER" id="PTHR12461">
    <property type="entry name" value="HYPOXIA-INDUCIBLE FACTOR 1 ALPHA INHIBITOR-RELATED"/>
    <property type="match status" value="1"/>
</dbReference>
<dbReference type="Pfam" id="PF24472">
    <property type="entry name" value="ARM_KDM8_N"/>
    <property type="match status" value="1"/>
</dbReference>
<dbReference type="Pfam" id="PF13621">
    <property type="entry name" value="Cupin_8"/>
    <property type="match status" value="1"/>
</dbReference>
<dbReference type="SMART" id="SM00558">
    <property type="entry name" value="JmjC"/>
    <property type="match status" value="1"/>
</dbReference>
<dbReference type="SUPFAM" id="SSF51197">
    <property type="entry name" value="Clavaminate synthase-like"/>
    <property type="match status" value="1"/>
</dbReference>
<dbReference type="PROSITE" id="PS51184">
    <property type="entry name" value="JMJC"/>
    <property type="match status" value="1"/>
</dbReference>
<protein>
    <recommendedName>
        <fullName>Lysine-specific demethylase 8</fullName>
        <ecNumber>1.14.11.27</ecNumber>
    </recommendedName>
    <alternativeName>
        <fullName>JmjC domain-containing protein 5</fullName>
    </alternativeName>
    <alternativeName>
        <fullName>Jumonji domain-containing protein 5</fullName>
    </alternativeName>
</protein>
<accession>A8E534</accession>
<organism>
    <name type="scientific">Danio rerio</name>
    <name type="common">Zebrafish</name>
    <name type="synonym">Brachydanio rerio</name>
    <dbReference type="NCBI Taxonomy" id="7955"/>
    <lineage>
        <taxon>Eukaryota</taxon>
        <taxon>Metazoa</taxon>
        <taxon>Chordata</taxon>
        <taxon>Craniata</taxon>
        <taxon>Vertebrata</taxon>
        <taxon>Euteleostomi</taxon>
        <taxon>Actinopterygii</taxon>
        <taxon>Neopterygii</taxon>
        <taxon>Teleostei</taxon>
        <taxon>Ostariophysi</taxon>
        <taxon>Cypriniformes</taxon>
        <taxon>Danionidae</taxon>
        <taxon>Danioninae</taxon>
        <taxon>Danio</taxon>
    </lineage>
</organism>
<feature type="chain" id="PRO_0000399814" description="Lysine-specific demethylase 8">
    <location>
        <begin position="1"/>
        <end position="406"/>
    </location>
</feature>
<feature type="domain" description="JmjC" evidence="3">
    <location>
        <begin position="270"/>
        <end position="406"/>
    </location>
</feature>
<feature type="region of interest" description="Disordered" evidence="4">
    <location>
        <begin position="143"/>
        <end position="162"/>
    </location>
</feature>
<feature type="compositionally biased region" description="Basic and acidic residues" evidence="4">
    <location>
        <begin position="143"/>
        <end position="152"/>
    </location>
</feature>
<feature type="binding site" evidence="3">
    <location>
        <position position="311"/>
    </location>
    <ligand>
        <name>Fe cation</name>
        <dbReference type="ChEBI" id="CHEBI:24875"/>
        <note>catalytic</note>
    </ligand>
</feature>
<feature type="binding site" evidence="3">
    <location>
        <position position="313"/>
    </location>
    <ligand>
        <name>Fe cation</name>
        <dbReference type="ChEBI" id="CHEBI:24875"/>
        <note>catalytic</note>
    </ligand>
</feature>
<evidence type="ECO:0000250" key="1">
    <source>
        <dbReference type="UniProtKB" id="Q8N371"/>
    </source>
</evidence>
<evidence type="ECO:0000250" key="2">
    <source>
        <dbReference type="UniProtKB" id="Q9CXT6"/>
    </source>
</evidence>
<evidence type="ECO:0000255" key="3">
    <source>
        <dbReference type="PROSITE-ProRule" id="PRU00538"/>
    </source>
</evidence>
<evidence type="ECO:0000256" key="4">
    <source>
        <dbReference type="SAM" id="MobiDB-lite"/>
    </source>
</evidence>
<proteinExistence type="evidence at transcript level"/>
<name>KDM8_DANRE</name>
<comment type="function">
    <text evidence="1 2">Histone demethylase required for G2/M phase cell cycle progression (By similarity). Specifically demethylates dimethylated 'Lys-36' (H3K36me2) of histone H3, an epigenetic repressive mark, thereby acting as a transcription activator (By similarity). May play a role in the regulation of the circadian clock (By similarity).</text>
</comment>
<comment type="catalytic activity">
    <reaction>
        <text>N(6),N(6)-dimethyl-L-lysyl(36)-[histone H3] + 2 2-oxoglutarate + 2 O2 = L-lysyl(36)-[histone H3] + 2 formaldehyde + 2 succinate + 2 CO2</text>
        <dbReference type="Rhea" id="RHEA:42032"/>
        <dbReference type="Rhea" id="RHEA-COMP:9785"/>
        <dbReference type="Rhea" id="RHEA-COMP:9787"/>
        <dbReference type="ChEBI" id="CHEBI:15379"/>
        <dbReference type="ChEBI" id="CHEBI:16526"/>
        <dbReference type="ChEBI" id="CHEBI:16810"/>
        <dbReference type="ChEBI" id="CHEBI:16842"/>
        <dbReference type="ChEBI" id="CHEBI:29969"/>
        <dbReference type="ChEBI" id="CHEBI:30031"/>
        <dbReference type="ChEBI" id="CHEBI:61976"/>
        <dbReference type="EC" id="1.14.11.27"/>
    </reaction>
</comment>
<comment type="cofactor">
    <cofactor evidence="1">
        <name>Fe(2+)</name>
        <dbReference type="ChEBI" id="CHEBI:29033"/>
    </cofactor>
    <text evidence="1">Binds 1 Fe(2+) ion per subunit.</text>
</comment>
<comment type="subcellular location">
    <subcellularLocation>
        <location evidence="1">Nucleus</location>
    </subcellularLocation>
</comment>
<reference key="1">
    <citation type="submission" date="2007-09" db="EMBL/GenBank/DDBJ databases">
        <authorList>
            <consortium name="NIH - Zebrafish Gene Collection (ZGC) project"/>
        </authorList>
    </citation>
    <scope>NUCLEOTIDE SEQUENCE [LARGE SCALE MRNA]</scope>
    <source>
        <tissue>Testis</tissue>
    </source>
</reference>
<keyword id="KW-0090">Biological rhythms</keyword>
<keyword id="KW-0131">Cell cycle</keyword>
<keyword id="KW-0156">Chromatin regulator</keyword>
<keyword id="KW-0223">Dioxygenase</keyword>
<keyword id="KW-0408">Iron</keyword>
<keyword id="KW-0479">Metal-binding</keyword>
<keyword id="KW-0539">Nucleus</keyword>
<keyword id="KW-0560">Oxidoreductase</keyword>
<keyword id="KW-1185">Reference proteome</keyword>
<keyword id="KW-0804">Transcription</keyword>
<keyword id="KW-0805">Transcription regulation</keyword>